<organism>
    <name type="scientific">Campylobacter jejuni subsp. jejuni serotype O:23/36 (strain 81-176)</name>
    <dbReference type="NCBI Taxonomy" id="354242"/>
    <lineage>
        <taxon>Bacteria</taxon>
        <taxon>Pseudomonadati</taxon>
        <taxon>Campylobacterota</taxon>
        <taxon>Epsilonproteobacteria</taxon>
        <taxon>Campylobacterales</taxon>
        <taxon>Campylobacteraceae</taxon>
        <taxon>Campylobacter</taxon>
    </lineage>
</organism>
<comment type="function">
    <text evidence="1">Involved in unsaturated fatty acids biosynthesis. Catalyzes the dehydration of short chain beta-hydroxyacyl-ACPs and long chain saturated and unsaturated beta-hydroxyacyl-ACPs.</text>
</comment>
<comment type="catalytic activity">
    <reaction evidence="1">
        <text>a (3R)-hydroxyacyl-[ACP] = a (2E)-enoyl-[ACP] + H2O</text>
        <dbReference type="Rhea" id="RHEA:13097"/>
        <dbReference type="Rhea" id="RHEA-COMP:9925"/>
        <dbReference type="Rhea" id="RHEA-COMP:9945"/>
        <dbReference type="ChEBI" id="CHEBI:15377"/>
        <dbReference type="ChEBI" id="CHEBI:78784"/>
        <dbReference type="ChEBI" id="CHEBI:78827"/>
        <dbReference type="EC" id="4.2.1.59"/>
    </reaction>
</comment>
<comment type="subcellular location">
    <subcellularLocation>
        <location evidence="1">Cytoplasm</location>
    </subcellularLocation>
</comment>
<comment type="similarity">
    <text evidence="1">Belongs to the thioester dehydratase family. FabZ subfamily.</text>
</comment>
<reference key="1">
    <citation type="submission" date="2006-12" db="EMBL/GenBank/DDBJ databases">
        <authorList>
            <person name="Fouts D.E."/>
            <person name="Nelson K.E."/>
            <person name="Sebastian Y."/>
        </authorList>
    </citation>
    <scope>NUCLEOTIDE SEQUENCE [LARGE SCALE GENOMIC DNA]</scope>
    <source>
        <strain>81-176</strain>
    </source>
</reference>
<keyword id="KW-0002">3D-structure</keyword>
<keyword id="KW-0963">Cytoplasm</keyword>
<keyword id="KW-0441">Lipid A biosynthesis</keyword>
<keyword id="KW-0444">Lipid biosynthesis</keyword>
<keyword id="KW-0443">Lipid metabolism</keyword>
<keyword id="KW-0456">Lyase</keyword>
<protein>
    <recommendedName>
        <fullName evidence="1">3-hydroxyacyl-[acyl-carrier-protein] dehydratase FabZ</fullName>
        <ecNumber evidence="1">4.2.1.59</ecNumber>
    </recommendedName>
    <alternativeName>
        <fullName evidence="1">(3R)-hydroxymyristoyl-[acyl-carrier-protein] dehydratase</fullName>
        <shortName evidence="1">(3R)-hydroxymyristoyl-ACP dehydrase</shortName>
    </alternativeName>
    <alternativeName>
        <fullName evidence="1">Beta-hydroxyacyl-ACP dehydratase</fullName>
    </alternativeName>
</protein>
<dbReference type="EC" id="4.2.1.59" evidence="1"/>
<dbReference type="EMBL" id="CP000538">
    <property type="protein sequence ID" value="EAQ73095.1"/>
    <property type="molecule type" value="Genomic_DNA"/>
</dbReference>
<dbReference type="RefSeq" id="WP_002857452.1">
    <property type="nucleotide sequence ID" value="NC_008787.1"/>
</dbReference>
<dbReference type="PDB" id="3D6X">
    <property type="method" value="X-ray"/>
    <property type="resolution" value="2.59 A"/>
    <property type="chains" value="A/B/C/D/E/F=1-146"/>
</dbReference>
<dbReference type="PDBsum" id="3D6X"/>
<dbReference type="SMR" id="A1VXZ7"/>
<dbReference type="KEGG" id="cjj:CJJ81176_0300"/>
<dbReference type="eggNOG" id="COG0764">
    <property type="taxonomic scope" value="Bacteria"/>
</dbReference>
<dbReference type="HOGENOM" id="CLU_078912_1_2_7"/>
<dbReference type="EvolutionaryTrace" id="A1VXZ7"/>
<dbReference type="Proteomes" id="UP000000646">
    <property type="component" value="Chromosome"/>
</dbReference>
<dbReference type="GO" id="GO:0005737">
    <property type="term" value="C:cytoplasm"/>
    <property type="evidence" value="ECO:0007669"/>
    <property type="project" value="UniProtKB-SubCell"/>
</dbReference>
<dbReference type="GO" id="GO:0016020">
    <property type="term" value="C:membrane"/>
    <property type="evidence" value="ECO:0007669"/>
    <property type="project" value="GOC"/>
</dbReference>
<dbReference type="GO" id="GO:0019171">
    <property type="term" value="F:(3R)-hydroxyacyl-[acyl-carrier-protein] dehydratase activity"/>
    <property type="evidence" value="ECO:0007669"/>
    <property type="project" value="UniProtKB-EC"/>
</dbReference>
<dbReference type="GO" id="GO:0006633">
    <property type="term" value="P:fatty acid biosynthetic process"/>
    <property type="evidence" value="ECO:0007669"/>
    <property type="project" value="UniProtKB-UniRule"/>
</dbReference>
<dbReference type="GO" id="GO:0009245">
    <property type="term" value="P:lipid A biosynthetic process"/>
    <property type="evidence" value="ECO:0007669"/>
    <property type="project" value="UniProtKB-UniRule"/>
</dbReference>
<dbReference type="CDD" id="cd01288">
    <property type="entry name" value="FabZ"/>
    <property type="match status" value="1"/>
</dbReference>
<dbReference type="FunFam" id="3.10.129.10:FF:000076">
    <property type="entry name" value="3-hydroxyacyl-[acyl-carrier-protein] dehydratase FabZ"/>
    <property type="match status" value="1"/>
</dbReference>
<dbReference type="Gene3D" id="3.10.129.10">
    <property type="entry name" value="Hotdog Thioesterase"/>
    <property type="match status" value="1"/>
</dbReference>
<dbReference type="HAMAP" id="MF_00406">
    <property type="entry name" value="FabZ"/>
    <property type="match status" value="1"/>
</dbReference>
<dbReference type="InterPro" id="IPR013114">
    <property type="entry name" value="FabA_FabZ"/>
</dbReference>
<dbReference type="InterPro" id="IPR010084">
    <property type="entry name" value="FabZ"/>
</dbReference>
<dbReference type="InterPro" id="IPR029069">
    <property type="entry name" value="HotDog_dom_sf"/>
</dbReference>
<dbReference type="NCBIfam" id="TIGR01750">
    <property type="entry name" value="fabZ"/>
    <property type="match status" value="1"/>
</dbReference>
<dbReference type="NCBIfam" id="NF000582">
    <property type="entry name" value="PRK00006.1"/>
    <property type="match status" value="1"/>
</dbReference>
<dbReference type="PANTHER" id="PTHR30272">
    <property type="entry name" value="3-HYDROXYACYL-[ACYL-CARRIER-PROTEIN] DEHYDRATASE"/>
    <property type="match status" value="1"/>
</dbReference>
<dbReference type="PANTHER" id="PTHR30272:SF1">
    <property type="entry name" value="3-HYDROXYACYL-[ACYL-CARRIER-PROTEIN] DEHYDRATASE"/>
    <property type="match status" value="1"/>
</dbReference>
<dbReference type="Pfam" id="PF07977">
    <property type="entry name" value="FabA"/>
    <property type="match status" value="1"/>
</dbReference>
<dbReference type="SUPFAM" id="SSF54637">
    <property type="entry name" value="Thioesterase/thiol ester dehydrase-isomerase"/>
    <property type="match status" value="1"/>
</dbReference>
<feature type="chain" id="PRO_0000301885" description="3-hydroxyacyl-[acyl-carrier-protein] dehydratase FabZ">
    <location>
        <begin position="1"/>
        <end position="146"/>
    </location>
</feature>
<feature type="active site" evidence="1">
    <location>
        <position position="48"/>
    </location>
</feature>
<feature type="helix" evidence="2">
    <location>
        <begin position="4"/>
        <end position="10"/>
    </location>
</feature>
<feature type="strand" evidence="2">
    <location>
        <begin position="22"/>
        <end position="27"/>
    </location>
</feature>
<feature type="turn" evidence="2">
    <location>
        <begin position="28"/>
        <end position="30"/>
    </location>
</feature>
<feature type="strand" evidence="2">
    <location>
        <begin position="31"/>
        <end position="37"/>
    </location>
</feature>
<feature type="helix" evidence="2">
    <location>
        <begin position="44"/>
        <end position="47"/>
    </location>
</feature>
<feature type="helix" evidence="2">
    <location>
        <begin position="57"/>
        <end position="73"/>
    </location>
</feature>
<feature type="strand" evidence="2">
    <location>
        <begin position="87"/>
        <end position="97"/>
    </location>
</feature>
<feature type="strand" evidence="2">
    <location>
        <begin position="106"/>
        <end position="117"/>
    </location>
</feature>
<feature type="strand" evidence="2">
    <location>
        <begin position="120"/>
        <end position="129"/>
    </location>
</feature>
<feature type="strand" evidence="2">
    <location>
        <begin position="132"/>
        <end position="143"/>
    </location>
</feature>
<sequence>MIDVMQIQEILPHRYPFLLVDKITELKVKEVVLGYKNISISDHVFMGHFPGHPIYPGVLILEGMAQTGGVLAFESMEDKVDPKSKVVYFTGIDGAKFRNPVRPGDRLDYEMSVVKNRGNMWIFKGQAFVDGNLVAEAELKAMIVDK</sequence>
<accession>A1VXZ7</accession>
<name>FABZ_CAMJJ</name>
<proteinExistence type="evidence at protein level"/>
<evidence type="ECO:0000255" key="1">
    <source>
        <dbReference type="HAMAP-Rule" id="MF_00406"/>
    </source>
</evidence>
<evidence type="ECO:0007829" key="2">
    <source>
        <dbReference type="PDB" id="3D6X"/>
    </source>
</evidence>
<gene>
    <name evidence="1" type="primary">fabZ</name>
    <name type="ordered locus">CJJ81176_0300</name>
</gene>